<organism>
    <name type="scientific">Campylobacter jejuni subsp. jejuni serotype O:6 (strain 81116 / NCTC 11828)</name>
    <dbReference type="NCBI Taxonomy" id="407148"/>
    <lineage>
        <taxon>Bacteria</taxon>
        <taxon>Pseudomonadati</taxon>
        <taxon>Campylobacterota</taxon>
        <taxon>Epsilonproteobacteria</taxon>
        <taxon>Campylobacterales</taxon>
        <taxon>Campylobacteraceae</taxon>
        <taxon>Campylobacter</taxon>
    </lineage>
</organism>
<keyword id="KW-0067">ATP-binding</keyword>
<keyword id="KW-0963">Cytoplasm</keyword>
<keyword id="KW-1015">Disulfide bond</keyword>
<keyword id="KW-0547">Nucleotide-binding</keyword>
<keyword id="KW-0694">RNA-binding</keyword>
<keyword id="KW-0808">Transferase</keyword>
<keyword id="KW-0819">tRNA processing</keyword>
<keyword id="KW-0820">tRNA-binding</keyword>
<proteinExistence type="inferred from homology"/>
<gene>
    <name evidence="1" type="primary">mnmA</name>
    <name type="synonym">trmU</name>
    <name type="ordered locus">C8J_0050</name>
</gene>
<reference key="1">
    <citation type="journal article" date="2007" name="J. Bacteriol.">
        <title>The complete genome sequence of Campylobacter jejuni strain 81116 (NCTC11828).</title>
        <authorList>
            <person name="Pearson B.M."/>
            <person name="Gaskin D.J.H."/>
            <person name="Segers R.P.A.M."/>
            <person name="Wells J.M."/>
            <person name="Nuijten P.J.M."/>
            <person name="van Vliet A.H.M."/>
        </authorList>
    </citation>
    <scope>NUCLEOTIDE SEQUENCE [LARGE SCALE GENOMIC DNA]</scope>
    <source>
        <strain>81116 / NCTC 11828</strain>
    </source>
</reference>
<sequence>MKILVAMSGGVDSTVTAYKLKNLGHEVIGCYMKLHGKPNYHEENIKKVEKVANFLQIPYHILDLQKDFKNKVYMPFVDTYKEGKTPNPCALCNRFIKLGKLLEFAKSLGCEKLATGHYARLENNLIKTAVDESKDQSYFLASADKEALKYLIFPLGEMKKEDVKKFASTIEVLKSFATQKESSEICFVEDTYVQVLDQFMDTKIPGEVLDSSGKVVGKHEGYMHYTIGKRRGFEVRGAHEPHFVLKINPKQNQIIVGTKEELKISEFKLKNINLFIDAKELDCEVKIRYRSKSTPCKVEIYEDKSAKITLKDPVYGLASGQMAVFYDHDKVIASGFIE</sequence>
<protein>
    <recommendedName>
        <fullName evidence="1">tRNA-specific 2-thiouridylase MnmA</fullName>
        <ecNumber evidence="1">2.8.1.13</ecNumber>
    </recommendedName>
</protein>
<evidence type="ECO:0000255" key="1">
    <source>
        <dbReference type="HAMAP-Rule" id="MF_00144"/>
    </source>
</evidence>
<feature type="chain" id="PRO_1000071466" description="tRNA-specific 2-thiouridylase MnmA">
    <location>
        <begin position="1"/>
        <end position="338"/>
    </location>
</feature>
<feature type="region of interest" description="Interaction with tRNA" evidence="1">
    <location>
        <begin position="134"/>
        <end position="136"/>
    </location>
</feature>
<feature type="region of interest" description="Interaction with tRNA" evidence="1">
    <location>
        <begin position="288"/>
        <end position="289"/>
    </location>
</feature>
<feature type="active site" description="Nucleophile" evidence="1">
    <location>
        <position position="92"/>
    </location>
</feature>
<feature type="active site" description="Cysteine persulfide intermediate" evidence="1">
    <location>
        <position position="186"/>
    </location>
</feature>
<feature type="binding site" evidence="1">
    <location>
        <begin position="6"/>
        <end position="13"/>
    </location>
    <ligand>
        <name>ATP</name>
        <dbReference type="ChEBI" id="CHEBI:30616"/>
    </ligand>
</feature>
<feature type="binding site" evidence="1">
    <location>
        <position position="32"/>
    </location>
    <ligand>
        <name>ATP</name>
        <dbReference type="ChEBI" id="CHEBI:30616"/>
    </ligand>
</feature>
<feature type="binding site" evidence="1">
    <location>
        <position position="116"/>
    </location>
    <ligand>
        <name>ATP</name>
        <dbReference type="ChEBI" id="CHEBI:30616"/>
    </ligand>
</feature>
<feature type="site" description="Interaction with tRNA" evidence="1">
    <location>
        <position position="117"/>
    </location>
</feature>
<feature type="site" description="Interaction with tRNA" evidence="1">
    <location>
        <position position="321"/>
    </location>
</feature>
<feature type="disulfide bond" description="Alternate" evidence="1">
    <location>
        <begin position="92"/>
        <end position="186"/>
    </location>
</feature>
<name>MNMA_CAMJ8</name>
<accession>A8FJL3</accession>
<comment type="function">
    <text evidence="1">Catalyzes the 2-thiolation of uridine at the wobble position (U34) of tRNA, leading to the formation of s(2)U34.</text>
</comment>
<comment type="catalytic activity">
    <reaction evidence="1">
        <text>S-sulfanyl-L-cysteinyl-[protein] + uridine(34) in tRNA + AH2 + ATP = 2-thiouridine(34) in tRNA + L-cysteinyl-[protein] + A + AMP + diphosphate + H(+)</text>
        <dbReference type="Rhea" id="RHEA:47032"/>
        <dbReference type="Rhea" id="RHEA-COMP:10131"/>
        <dbReference type="Rhea" id="RHEA-COMP:11726"/>
        <dbReference type="Rhea" id="RHEA-COMP:11727"/>
        <dbReference type="Rhea" id="RHEA-COMP:11728"/>
        <dbReference type="ChEBI" id="CHEBI:13193"/>
        <dbReference type="ChEBI" id="CHEBI:15378"/>
        <dbReference type="ChEBI" id="CHEBI:17499"/>
        <dbReference type="ChEBI" id="CHEBI:29950"/>
        <dbReference type="ChEBI" id="CHEBI:30616"/>
        <dbReference type="ChEBI" id="CHEBI:33019"/>
        <dbReference type="ChEBI" id="CHEBI:61963"/>
        <dbReference type="ChEBI" id="CHEBI:65315"/>
        <dbReference type="ChEBI" id="CHEBI:87170"/>
        <dbReference type="ChEBI" id="CHEBI:456215"/>
        <dbReference type="EC" id="2.8.1.13"/>
    </reaction>
</comment>
<comment type="subcellular location">
    <subcellularLocation>
        <location evidence="1">Cytoplasm</location>
    </subcellularLocation>
</comment>
<comment type="similarity">
    <text evidence="1">Belongs to the MnmA/TRMU family.</text>
</comment>
<dbReference type="EC" id="2.8.1.13" evidence="1"/>
<dbReference type="EMBL" id="CP000814">
    <property type="protein sequence ID" value="ABV51650.1"/>
    <property type="molecule type" value="Genomic_DNA"/>
</dbReference>
<dbReference type="RefSeq" id="WP_002876927.1">
    <property type="nucleotide sequence ID" value="NC_009839.1"/>
</dbReference>
<dbReference type="SMR" id="A8FJL3"/>
<dbReference type="KEGG" id="cju:C8J_0050"/>
<dbReference type="HOGENOM" id="CLU_035188_0_0_7"/>
<dbReference type="GO" id="GO:0005737">
    <property type="term" value="C:cytoplasm"/>
    <property type="evidence" value="ECO:0007669"/>
    <property type="project" value="UniProtKB-SubCell"/>
</dbReference>
<dbReference type="GO" id="GO:0005524">
    <property type="term" value="F:ATP binding"/>
    <property type="evidence" value="ECO:0007669"/>
    <property type="project" value="UniProtKB-KW"/>
</dbReference>
<dbReference type="GO" id="GO:0000049">
    <property type="term" value="F:tRNA binding"/>
    <property type="evidence" value="ECO:0007669"/>
    <property type="project" value="UniProtKB-KW"/>
</dbReference>
<dbReference type="GO" id="GO:0103016">
    <property type="term" value="F:tRNA-uridine 2-sulfurtransferase activity"/>
    <property type="evidence" value="ECO:0007669"/>
    <property type="project" value="UniProtKB-EC"/>
</dbReference>
<dbReference type="GO" id="GO:0002143">
    <property type="term" value="P:tRNA wobble position uridine thiolation"/>
    <property type="evidence" value="ECO:0007669"/>
    <property type="project" value="TreeGrafter"/>
</dbReference>
<dbReference type="CDD" id="cd01998">
    <property type="entry name" value="MnmA_TRMU-like"/>
    <property type="match status" value="1"/>
</dbReference>
<dbReference type="FunFam" id="2.30.30.280:FF:000001">
    <property type="entry name" value="tRNA-specific 2-thiouridylase MnmA"/>
    <property type="match status" value="1"/>
</dbReference>
<dbReference type="Gene3D" id="2.30.30.280">
    <property type="entry name" value="Adenine nucleotide alpha hydrolases-like domains"/>
    <property type="match status" value="1"/>
</dbReference>
<dbReference type="Gene3D" id="3.40.50.620">
    <property type="entry name" value="HUPs"/>
    <property type="match status" value="1"/>
</dbReference>
<dbReference type="Gene3D" id="2.40.30.10">
    <property type="entry name" value="Translation factors"/>
    <property type="match status" value="1"/>
</dbReference>
<dbReference type="HAMAP" id="MF_00144">
    <property type="entry name" value="tRNA_thiouridyl_MnmA"/>
    <property type="match status" value="1"/>
</dbReference>
<dbReference type="InterPro" id="IPR004506">
    <property type="entry name" value="MnmA-like"/>
</dbReference>
<dbReference type="InterPro" id="IPR046885">
    <property type="entry name" value="MnmA-like_C"/>
</dbReference>
<dbReference type="InterPro" id="IPR046884">
    <property type="entry name" value="MnmA-like_central"/>
</dbReference>
<dbReference type="InterPro" id="IPR023382">
    <property type="entry name" value="MnmA-like_central_sf"/>
</dbReference>
<dbReference type="InterPro" id="IPR014729">
    <property type="entry name" value="Rossmann-like_a/b/a_fold"/>
</dbReference>
<dbReference type="NCBIfam" id="NF001138">
    <property type="entry name" value="PRK00143.1"/>
    <property type="match status" value="1"/>
</dbReference>
<dbReference type="NCBIfam" id="TIGR00420">
    <property type="entry name" value="trmU"/>
    <property type="match status" value="1"/>
</dbReference>
<dbReference type="PANTHER" id="PTHR11933:SF5">
    <property type="entry name" value="MITOCHONDRIAL TRNA-SPECIFIC 2-THIOURIDYLASE 1"/>
    <property type="match status" value="1"/>
</dbReference>
<dbReference type="PANTHER" id="PTHR11933">
    <property type="entry name" value="TRNA 5-METHYLAMINOMETHYL-2-THIOURIDYLATE -METHYLTRANSFERASE"/>
    <property type="match status" value="1"/>
</dbReference>
<dbReference type="Pfam" id="PF03054">
    <property type="entry name" value="tRNA_Me_trans"/>
    <property type="match status" value="1"/>
</dbReference>
<dbReference type="Pfam" id="PF20258">
    <property type="entry name" value="tRNA_Me_trans_C"/>
    <property type="match status" value="1"/>
</dbReference>
<dbReference type="Pfam" id="PF20259">
    <property type="entry name" value="tRNA_Me_trans_M"/>
    <property type="match status" value="1"/>
</dbReference>
<dbReference type="SUPFAM" id="SSF52402">
    <property type="entry name" value="Adenine nucleotide alpha hydrolases-like"/>
    <property type="match status" value="1"/>
</dbReference>